<protein>
    <recommendedName>
        <fullName evidence="1">Inorganic pyrophosphatase</fullName>
        <ecNumber evidence="1">3.6.1.1</ecNumber>
    </recommendedName>
    <alternativeName>
        <fullName evidence="1">Pyrophosphate phospho-hydrolase</fullName>
        <shortName evidence="1">PPase</shortName>
    </alternativeName>
</protein>
<dbReference type="EC" id="3.6.1.1" evidence="1"/>
<dbReference type="EMBL" id="X81842">
    <property type="protein sequence ID" value="CAA57434.1"/>
    <property type="molecule type" value="Genomic_DNA"/>
</dbReference>
<dbReference type="EMBL" id="CP000077">
    <property type="protein sequence ID" value="AAY80317.1"/>
    <property type="molecule type" value="Genomic_DNA"/>
</dbReference>
<dbReference type="PIR" id="S65965">
    <property type="entry name" value="S57617"/>
</dbReference>
<dbReference type="RefSeq" id="WP_011277819.1">
    <property type="nucleotide sequence ID" value="NC_007181.1"/>
</dbReference>
<dbReference type="PDB" id="1QEZ">
    <property type="method" value="X-ray"/>
    <property type="resolution" value="2.70 A"/>
    <property type="chains" value="A/B/C/D/E/F=1-173"/>
</dbReference>
<dbReference type="PDBsum" id="1QEZ"/>
<dbReference type="SMR" id="P50308"/>
<dbReference type="STRING" id="330779.Saci_0955"/>
<dbReference type="GeneID" id="14551466"/>
<dbReference type="GeneID" id="78441302"/>
<dbReference type="KEGG" id="sai:Saci_0955"/>
<dbReference type="PATRIC" id="fig|330779.12.peg.916"/>
<dbReference type="eggNOG" id="arCOG01711">
    <property type="taxonomic scope" value="Archaea"/>
</dbReference>
<dbReference type="HOGENOM" id="CLU_073198_1_0_2"/>
<dbReference type="BRENDA" id="3.6.1.1">
    <property type="organism ID" value="6160"/>
</dbReference>
<dbReference type="EvolutionaryTrace" id="P50308"/>
<dbReference type="Proteomes" id="UP000001018">
    <property type="component" value="Chromosome"/>
</dbReference>
<dbReference type="GO" id="GO:0005737">
    <property type="term" value="C:cytoplasm"/>
    <property type="evidence" value="ECO:0007669"/>
    <property type="project" value="UniProtKB-SubCell"/>
</dbReference>
<dbReference type="GO" id="GO:0004427">
    <property type="term" value="F:inorganic diphosphate phosphatase activity"/>
    <property type="evidence" value="ECO:0007669"/>
    <property type="project" value="UniProtKB-UniRule"/>
</dbReference>
<dbReference type="GO" id="GO:0000287">
    <property type="term" value="F:magnesium ion binding"/>
    <property type="evidence" value="ECO:0007669"/>
    <property type="project" value="UniProtKB-UniRule"/>
</dbReference>
<dbReference type="GO" id="GO:0006796">
    <property type="term" value="P:phosphate-containing compound metabolic process"/>
    <property type="evidence" value="ECO:0007669"/>
    <property type="project" value="InterPro"/>
</dbReference>
<dbReference type="CDD" id="cd00412">
    <property type="entry name" value="pyrophosphatase"/>
    <property type="match status" value="1"/>
</dbReference>
<dbReference type="FunFam" id="3.90.80.10:FF:000003">
    <property type="entry name" value="Inorganic pyrophosphatase"/>
    <property type="match status" value="1"/>
</dbReference>
<dbReference type="Gene3D" id="3.90.80.10">
    <property type="entry name" value="Inorganic pyrophosphatase"/>
    <property type="match status" value="1"/>
</dbReference>
<dbReference type="HAMAP" id="MF_00209">
    <property type="entry name" value="Inorganic_PPase"/>
    <property type="match status" value="1"/>
</dbReference>
<dbReference type="InterPro" id="IPR008162">
    <property type="entry name" value="Pyrophosphatase"/>
</dbReference>
<dbReference type="InterPro" id="IPR036649">
    <property type="entry name" value="Pyrophosphatase_sf"/>
</dbReference>
<dbReference type="NCBIfam" id="NF002317">
    <property type="entry name" value="PRK01250.1"/>
    <property type="match status" value="1"/>
</dbReference>
<dbReference type="PANTHER" id="PTHR10286">
    <property type="entry name" value="INORGANIC PYROPHOSPHATASE"/>
    <property type="match status" value="1"/>
</dbReference>
<dbReference type="Pfam" id="PF00719">
    <property type="entry name" value="Pyrophosphatase"/>
    <property type="match status" value="1"/>
</dbReference>
<dbReference type="SUPFAM" id="SSF50324">
    <property type="entry name" value="Inorganic pyrophosphatase"/>
    <property type="match status" value="1"/>
</dbReference>
<dbReference type="PROSITE" id="PS00387">
    <property type="entry name" value="PPASE"/>
    <property type="match status" value="1"/>
</dbReference>
<sequence length="173" mass="19381">MKLSPGKNAPDVVNVLVEIPQGSNIKYEYDDEEGVIKVDRVLYTSMNYPFNYGFIPGTLEEDGDPLDVLVITNYQLYPGSVIEVRPIGILYMKDEEGEDAKIVAVPKDKTDPSFSNIKDINDLPQATKNKIVHFFEHYKELEPGKYVKISGWGSATEAKNRIQLAIKRVSGGQ</sequence>
<feature type="chain" id="PRO_0000137559" description="Inorganic pyrophosphatase">
    <location>
        <begin position="1"/>
        <end position="173"/>
    </location>
</feature>
<feature type="binding site" evidence="1">
    <location>
        <position position="26"/>
    </location>
    <ligand>
        <name>substrate</name>
    </ligand>
</feature>
<feature type="binding site" evidence="1">
    <location>
        <position position="40"/>
    </location>
    <ligand>
        <name>substrate</name>
    </ligand>
</feature>
<feature type="binding site" evidence="1">
    <location>
        <position position="52"/>
    </location>
    <ligand>
        <name>substrate</name>
    </ligand>
</feature>
<feature type="binding site" evidence="1">
    <location>
        <position position="62"/>
    </location>
    <ligand>
        <name>Mg(2+)</name>
        <dbReference type="ChEBI" id="CHEBI:18420"/>
        <label>1</label>
    </ligand>
</feature>
<feature type="binding site" evidence="1">
    <location>
        <position position="67"/>
    </location>
    <ligand>
        <name>Mg(2+)</name>
        <dbReference type="ChEBI" id="CHEBI:18420"/>
        <label>1</label>
    </ligand>
</feature>
<feature type="binding site" evidence="1">
    <location>
        <position position="67"/>
    </location>
    <ligand>
        <name>Mg(2+)</name>
        <dbReference type="ChEBI" id="CHEBI:18420"/>
        <label>2</label>
    </ligand>
</feature>
<feature type="binding site" evidence="1">
    <location>
        <position position="99"/>
    </location>
    <ligand>
        <name>Mg(2+)</name>
        <dbReference type="ChEBI" id="CHEBI:18420"/>
        <label>1</label>
    </ligand>
</feature>
<feature type="binding site" evidence="1">
    <location>
        <position position="138"/>
    </location>
    <ligand>
        <name>substrate</name>
    </ligand>
</feature>
<feature type="turn" evidence="2">
    <location>
        <begin position="7"/>
        <end position="11"/>
    </location>
</feature>
<feature type="strand" evidence="2">
    <location>
        <begin position="12"/>
        <end position="19"/>
    </location>
</feature>
<feature type="strand" evidence="2">
    <location>
        <begin position="25"/>
        <end position="30"/>
    </location>
</feature>
<feature type="turn" evidence="2">
    <location>
        <begin position="31"/>
        <end position="34"/>
    </location>
</feature>
<feature type="strand" evidence="2">
    <location>
        <begin position="35"/>
        <end position="41"/>
    </location>
</feature>
<feature type="strand" evidence="2">
    <location>
        <begin position="43"/>
        <end position="46"/>
    </location>
</feature>
<feature type="strand" evidence="2">
    <location>
        <begin position="49"/>
        <end position="54"/>
    </location>
</feature>
<feature type="strand" evidence="2">
    <location>
        <begin position="67"/>
        <end position="70"/>
    </location>
</feature>
<feature type="strand" evidence="2">
    <location>
        <begin position="81"/>
        <end position="94"/>
    </location>
</feature>
<feature type="strand" evidence="2">
    <location>
        <begin position="97"/>
        <end position="106"/>
    </location>
</feature>
<feature type="turn" evidence="2">
    <location>
        <begin position="108"/>
        <end position="110"/>
    </location>
</feature>
<feature type="helix" evidence="2">
    <location>
        <begin position="112"/>
        <end position="114"/>
    </location>
</feature>
<feature type="helix" evidence="2">
    <location>
        <begin position="120"/>
        <end position="122"/>
    </location>
</feature>
<feature type="helix" evidence="2">
    <location>
        <begin position="125"/>
        <end position="137"/>
    </location>
</feature>
<feature type="turn" evidence="2">
    <location>
        <begin position="138"/>
        <end position="141"/>
    </location>
</feature>
<feature type="strand" evidence="2">
    <location>
        <begin position="147"/>
        <end position="153"/>
    </location>
</feature>
<feature type="helix" evidence="2">
    <location>
        <begin position="155"/>
        <end position="169"/>
    </location>
</feature>
<evidence type="ECO:0000255" key="1">
    <source>
        <dbReference type="HAMAP-Rule" id="MF_00209"/>
    </source>
</evidence>
<evidence type="ECO:0007829" key="2">
    <source>
        <dbReference type="PDB" id="1QEZ"/>
    </source>
</evidence>
<accession>P50308</accession>
<accession>Q4JA63</accession>
<reference key="1">
    <citation type="journal article" date="1995" name="Arch. Biochem. Biophys.">
        <title>Purification, cloning, and sequencing of archaebacterial pyrophosphatase from the extreme thermoacidophile Sulfolobus acidocaldarius.</title>
        <authorList>
            <person name="Meyer W."/>
            <person name="Moll R."/>
            <person name="Kath T."/>
            <person name="Schaefer G."/>
        </authorList>
    </citation>
    <scope>NUCLEOTIDE SEQUENCE [GENOMIC DNA]</scope>
    <scope>PARTIAL PROTEIN SEQUENCE</scope>
    <scope>CHARACTERIZATION</scope>
    <source>
        <strain>ATCC 33909 / DSM 639 / JCM 8929 / NBRC 15157 / NCIMB 11770</strain>
    </source>
</reference>
<reference key="2">
    <citation type="journal article" date="2005" name="J. Bacteriol.">
        <title>The genome of Sulfolobus acidocaldarius, a model organism of the Crenarchaeota.</title>
        <authorList>
            <person name="Chen L."/>
            <person name="Bruegger K."/>
            <person name="Skovgaard M."/>
            <person name="Redder P."/>
            <person name="She Q."/>
            <person name="Torarinsson E."/>
            <person name="Greve B."/>
            <person name="Awayez M."/>
            <person name="Zibat A."/>
            <person name="Klenk H.-P."/>
            <person name="Garrett R.A."/>
        </authorList>
    </citation>
    <scope>NUCLEOTIDE SEQUENCE [LARGE SCALE GENOMIC DNA]</scope>
    <source>
        <strain>ATCC 33909 / DSM 639 / JCM 8929 / NBRC 15157 / NCIMB 11770</strain>
    </source>
</reference>
<reference key="3">
    <citation type="journal article" date="1999" name="Protein Sci.">
        <title>Sulfolobus acidocaldarius inorganic pyrophosphatase: structure, thermostability, and effect of metal ion in an archael pyrophosphatase.</title>
        <authorList>
            <person name="Leppaenen V.-M."/>
            <person name="Nummelin H."/>
            <person name="Hansen T."/>
            <person name="Lahti R."/>
            <person name="Schaefer G."/>
            <person name="Goldman A."/>
        </authorList>
    </citation>
    <scope>X-RAY CRYSTALLOGRAPHY (2.7 ANGSTROMS)</scope>
    <source>
        <strain>ATCC 33909 / DSM 639 / JCM 8929 / NBRC 15157 / NCIMB 11770</strain>
    </source>
</reference>
<proteinExistence type="evidence at protein level"/>
<name>IPYR_SULAC</name>
<gene>
    <name evidence="1" type="primary">ppa</name>
    <name type="ordered locus">Saci_0955</name>
</gene>
<organism>
    <name type="scientific">Sulfolobus acidocaldarius (strain ATCC 33909 / DSM 639 / JCM 8929 / NBRC 15157 / NCIMB 11770)</name>
    <dbReference type="NCBI Taxonomy" id="330779"/>
    <lineage>
        <taxon>Archaea</taxon>
        <taxon>Thermoproteota</taxon>
        <taxon>Thermoprotei</taxon>
        <taxon>Sulfolobales</taxon>
        <taxon>Sulfolobaceae</taxon>
        <taxon>Sulfolobus</taxon>
    </lineage>
</organism>
<comment type="function">
    <text evidence="1">Catalyzes the hydrolysis of inorganic pyrophosphate (PPi) forming two phosphate ions.</text>
</comment>
<comment type="catalytic activity">
    <reaction evidence="1">
        <text>diphosphate + H2O = 2 phosphate + H(+)</text>
        <dbReference type="Rhea" id="RHEA:24576"/>
        <dbReference type="ChEBI" id="CHEBI:15377"/>
        <dbReference type="ChEBI" id="CHEBI:15378"/>
        <dbReference type="ChEBI" id="CHEBI:33019"/>
        <dbReference type="ChEBI" id="CHEBI:43474"/>
        <dbReference type="EC" id="3.6.1.1"/>
    </reaction>
</comment>
<comment type="cofactor">
    <cofactor evidence="1">
        <name>Mg(2+)</name>
        <dbReference type="ChEBI" id="CHEBI:18420"/>
    </cofactor>
</comment>
<comment type="subunit">
    <text evidence="1">Homohexamer.</text>
</comment>
<comment type="subcellular location">
    <subcellularLocation>
        <location evidence="1">Cytoplasm</location>
    </subcellularLocation>
</comment>
<comment type="similarity">
    <text evidence="1">Belongs to the PPase family.</text>
</comment>
<keyword id="KW-0002">3D-structure</keyword>
<keyword id="KW-0963">Cytoplasm</keyword>
<keyword id="KW-0903">Direct protein sequencing</keyword>
<keyword id="KW-0378">Hydrolase</keyword>
<keyword id="KW-0460">Magnesium</keyword>
<keyword id="KW-0479">Metal-binding</keyword>
<keyword id="KW-1185">Reference proteome</keyword>